<sequence length="313" mass="35056">MSQEFAHLSVLLAETVGGLNIKDDGIYIDGTFGRGGHSRQILQRLGDNGRLIAIDRDPQAIEAAKQFSDDPRFQIVHGGFGQLADYVEDLGLVGKIDGVLLDLGVSSPQLDDAERGFSFLRDGPLDMRMDNSQGQTAAQWLAHAEIEDMAWVFKTYGEEKNARHIARCIAADRDKTPFLRTKDLADLIARITKNKERNKHPATRVFQAIRIYINSELDQIDQALEGALAVLAPQGRLSIISFHSLEDRIVKRFIRRHSQGESVPYGLPITEDQINKSRKLRAIGKAIMPSDEEIERNARARSSVLRIAERLDY</sequence>
<accession>A4Y2M8</accession>
<keyword id="KW-0963">Cytoplasm</keyword>
<keyword id="KW-0489">Methyltransferase</keyword>
<keyword id="KW-0698">rRNA processing</keyword>
<keyword id="KW-0949">S-adenosyl-L-methionine</keyword>
<keyword id="KW-0808">Transferase</keyword>
<evidence type="ECO:0000255" key="1">
    <source>
        <dbReference type="HAMAP-Rule" id="MF_01007"/>
    </source>
</evidence>
<reference key="1">
    <citation type="submission" date="2007-04" db="EMBL/GenBank/DDBJ databases">
        <title>Complete sequence of Shewanella putrefaciens CN-32.</title>
        <authorList>
            <consortium name="US DOE Joint Genome Institute"/>
            <person name="Copeland A."/>
            <person name="Lucas S."/>
            <person name="Lapidus A."/>
            <person name="Barry K."/>
            <person name="Detter J.C."/>
            <person name="Glavina del Rio T."/>
            <person name="Hammon N."/>
            <person name="Israni S."/>
            <person name="Dalin E."/>
            <person name="Tice H."/>
            <person name="Pitluck S."/>
            <person name="Chain P."/>
            <person name="Malfatti S."/>
            <person name="Shin M."/>
            <person name="Vergez L."/>
            <person name="Schmutz J."/>
            <person name="Larimer F."/>
            <person name="Land M."/>
            <person name="Hauser L."/>
            <person name="Kyrpides N."/>
            <person name="Mikhailova N."/>
            <person name="Romine M.F."/>
            <person name="Fredrickson J."/>
            <person name="Tiedje J."/>
            <person name="Richardson P."/>
        </authorList>
    </citation>
    <scope>NUCLEOTIDE SEQUENCE [LARGE SCALE GENOMIC DNA]</scope>
    <source>
        <strain>CN-32 / ATCC BAA-453</strain>
    </source>
</reference>
<dbReference type="EC" id="2.1.1.199" evidence="1"/>
<dbReference type="EMBL" id="CP000681">
    <property type="protein sequence ID" value="ABP74211.1"/>
    <property type="molecule type" value="Genomic_DNA"/>
</dbReference>
<dbReference type="SMR" id="A4Y2M8"/>
<dbReference type="STRING" id="319224.Sputcn32_0479"/>
<dbReference type="KEGG" id="spc:Sputcn32_0479"/>
<dbReference type="eggNOG" id="COG0275">
    <property type="taxonomic scope" value="Bacteria"/>
</dbReference>
<dbReference type="HOGENOM" id="CLU_038422_2_0_6"/>
<dbReference type="GO" id="GO:0005737">
    <property type="term" value="C:cytoplasm"/>
    <property type="evidence" value="ECO:0007669"/>
    <property type="project" value="UniProtKB-SubCell"/>
</dbReference>
<dbReference type="GO" id="GO:0071424">
    <property type="term" value="F:rRNA (cytosine-N4-)-methyltransferase activity"/>
    <property type="evidence" value="ECO:0007669"/>
    <property type="project" value="UniProtKB-UniRule"/>
</dbReference>
<dbReference type="GO" id="GO:0070475">
    <property type="term" value="P:rRNA base methylation"/>
    <property type="evidence" value="ECO:0007669"/>
    <property type="project" value="UniProtKB-UniRule"/>
</dbReference>
<dbReference type="FunFam" id="1.10.150.170:FF:000001">
    <property type="entry name" value="Ribosomal RNA small subunit methyltransferase H"/>
    <property type="match status" value="1"/>
</dbReference>
<dbReference type="Gene3D" id="1.10.150.170">
    <property type="entry name" value="Putative methyltransferase TM0872, insert domain"/>
    <property type="match status" value="1"/>
</dbReference>
<dbReference type="Gene3D" id="3.40.50.150">
    <property type="entry name" value="Vaccinia Virus protein VP39"/>
    <property type="match status" value="1"/>
</dbReference>
<dbReference type="HAMAP" id="MF_01007">
    <property type="entry name" value="16SrRNA_methyltr_H"/>
    <property type="match status" value="1"/>
</dbReference>
<dbReference type="InterPro" id="IPR002903">
    <property type="entry name" value="RsmH"/>
</dbReference>
<dbReference type="InterPro" id="IPR023397">
    <property type="entry name" value="SAM-dep_MeTrfase_MraW_recog"/>
</dbReference>
<dbReference type="InterPro" id="IPR029063">
    <property type="entry name" value="SAM-dependent_MTases_sf"/>
</dbReference>
<dbReference type="NCBIfam" id="TIGR00006">
    <property type="entry name" value="16S rRNA (cytosine(1402)-N(4))-methyltransferase RsmH"/>
    <property type="match status" value="1"/>
</dbReference>
<dbReference type="PANTHER" id="PTHR11265:SF0">
    <property type="entry name" value="12S RRNA N4-METHYLCYTIDINE METHYLTRANSFERASE"/>
    <property type="match status" value="1"/>
</dbReference>
<dbReference type="PANTHER" id="PTHR11265">
    <property type="entry name" value="S-ADENOSYL-METHYLTRANSFERASE MRAW"/>
    <property type="match status" value="1"/>
</dbReference>
<dbReference type="Pfam" id="PF01795">
    <property type="entry name" value="Methyltransf_5"/>
    <property type="match status" value="1"/>
</dbReference>
<dbReference type="PIRSF" id="PIRSF004486">
    <property type="entry name" value="MraW"/>
    <property type="match status" value="1"/>
</dbReference>
<dbReference type="SUPFAM" id="SSF81799">
    <property type="entry name" value="Putative methyltransferase TM0872, insert domain"/>
    <property type="match status" value="1"/>
</dbReference>
<dbReference type="SUPFAM" id="SSF53335">
    <property type="entry name" value="S-adenosyl-L-methionine-dependent methyltransferases"/>
    <property type="match status" value="1"/>
</dbReference>
<feature type="chain" id="PRO_0000387120" description="Ribosomal RNA small subunit methyltransferase H">
    <location>
        <begin position="1"/>
        <end position="313"/>
    </location>
</feature>
<feature type="binding site" evidence="1">
    <location>
        <begin position="35"/>
        <end position="37"/>
    </location>
    <ligand>
        <name>S-adenosyl-L-methionine</name>
        <dbReference type="ChEBI" id="CHEBI:59789"/>
    </ligand>
</feature>
<feature type="binding site" evidence="1">
    <location>
        <position position="55"/>
    </location>
    <ligand>
        <name>S-adenosyl-L-methionine</name>
        <dbReference type="ChEBI" id="CHEBI:59789"/>
    </ligand>
</feature>
<feature type="binding site" evidence="1">
    <location>
        <position position="80"/>
    </location>
    <ligand>
        <name>S-adenosyl-L-methionine</name>
        <dbReference type="ChEBI" id="CHEBI:59789"/>
    </ligand>
</feature>
<feature type="binding site" evidence="1">
    <location>
        <position position="102"/>
    </location>
    <ligand>
        <name>S-adenosyl-L-methionine</name>
        <dbReference type="ChEBI" id="CHEBI:59789"/>
    </ligand>
</feature>
<feature type="binding site" evidence="1">
    <location>
        <position position="109"/>
    </location>
    <ligand>
        <name>S-adenosyl-L-methionine</name>
        <dbReference type="ChEBI" id="CHEBI:59789"/>
    </ligand>
</feature>
<proteinExistence type="inferred from homology"/>
<protein>
    <recommendedName>
        <fullName evidence="1">Ribosomal RNA small subunit methyltransferase H</fullName>
        <ecNumber evidence="1">2.1.1.199</ecNumber>
    </recommendedName>
    <alternativeName>
        <fullName evidence="1">16S rRNA m(4)C1402 methyltransferase</fullName>
    </alternativeName>
    <alternativeName>
        <fullName evidence="1">rRNA (cytosine-N(4)-)-methyltransferase RsmH</fullName>
    </alternativeName>
</protein>
<name>RSMH_SHEPC</name>
<gene>
    <name evidence="1" type="primary">rsmH</name>
    <name type="synonym">mraW</name>
    <name type="ordered locus">Sputcn32_0479</name>
</gene>
<comment type="function">
    <text evidence="1">Specifically methylates the N4 position of cytidine in position 1402 (C1402) of 16S rRNA.</text>
</comment>
<comment type="catalytic activity">
    <reaction evidence="1">
        <text>cytidine(1402) in 16S rRNA + S-adenosyl-L-methionine = N(4)-methylcytidine(1402) in 16S rRNA + S-adenosyl-L-homocysteine + H(+)</text>
        <dbReference type="Rhea" id="RHEA:42928"/>
        <dbReference type="Rhea" id="RHEA-COMP:10286"/>
        <dbReference type="Rhea" id="RHEA-COMP:10287"/>
        <dbReference type="ChEBI" id="CHEBI:15378"/>
        <dbReference type="ChEBI" id="CHEBI:57856"/>
        <dbReference type="ChEBI" id="CHEBI:59789"/>
        <dbReference type="ChEBI" id="CHEBI:74506"/>
        <dbReference type="ChEBI" id="CHEBI:82748"/>
        <dbReference type="EC" id="2.1.1.199"/>
    </reaction>
</comment>
<comment type="subcellular location">
    <subcellularLocation>
        <location evidence="1">Cytoplasm</location>
    </subcellularLocation>
</comment>
<comment type="similarity">
    <text evidence="1">Belongs to the methyltransferase superfamily. RsmH family.</text>
</comment>
<organism>
    <name type="scientific">Shewanella putrefaciens (strain CN-32 / ATCC BAA-453)</name>
    <dbReference type="NCBI Taxonomy" id="319224"/>
    <lineage>
        <taxon>Bacteria</taxon>
        <taxon>Pseudomonadati</taxon>
        <taxon>Pseudomonadota</taxon>
        <taxon>Gammaproteobacteria</taxon>
        <taxon>Alteromonadales</taxon>
        <taxon>Shewanellaceae</taxon>
        <taxon>Shewanella</taxon>
    </lineage>
</organism>